<accession>P47178</accession>
<accession>D6VWW8</accession>
<accession>O94102</accession>
<protein>
    <recommendedName>
        <fullName>Cell wall protein DAN1</fullName>
    </recommendedName>
    <alternativeName>
        <fullName>Covalently-linked cell wall protein 13</fullName>
    </alternativeName>
    <alternativeName>
        <fullName>Delayed anaerobic protein 1</fullName>
    </alternativeName>
</protein>
<sequence>MSRISILAVAAALVASATAASVTTTLSPYDERVNLIELAVYVSDIGAHLSEYYAFQALHKTETYPPEIAKAVFAGGDFTTMLTGISGDEVTRMITGVPWYSTRLMGAISEALANEGIATAVPASTTEASSTSTSEASSAATESSSSSESSAETSSNAASTQATVSSESSSAASTIASSAESSVASSVASSVASSASFANTTAPVSSTSSISVTPVVQNGTDSTVTKTQASTVETTITSCSNNVCSTVTKPVSSKAQSTATSVTSSASRVIDVTTNGANKFNNGVFGAAAIAGAAALLL</sequence>
<keyword id="KW-0134">Cell wall</keyword>
<keyword id="KW-0903">Direct protein sequencing</keyword>
<keyword id="KW-0325">Glycoprotein</keyword>
<keyword id="KW-0336">GPI-anchor</keyword>
<keyword id="KW-0449">Lipoprotein</keyword>
<keyword id="KW-0472">Membrane</keyword>
<keyword id="KW-1185">Reference proteome</keyword>
<keyword id="KW-0964">Secreted</keyword>
<keyword id="KW-0732">Signal</keyword>
<proteinExistence type="evidence at protein level"/>
<gene>
    <name type="primary">DAN1</name>
    <name type="synonym">CCW13</name>
    <name type="ordered locus">YJR150C</name>
    <name type="ORF">J2217</name>
</gene>
<reference key="1">
    <citation type="journal article" date="1997" name="Gene">
        <title>The DAN1 gene of S. cerevisiae is regulated in parallel with the hypoxic genes, but by a different mechanism.</title>
        <authorList>
            <person name="Sertil O."/>
            <person name="Cohen B.D."/>
            <person name="Davies K.J.A."/>
            <person name="Lowry C.V."/>
        </authorList>
    </citation>
    <scope>NUCLEOTIDE SEQUENCE [GENOMIC DNA]</scope>
    <scope>INDUCTION</scope>
</reference>
<reference key="2">
    <citation type="journal article" date="1996" name="EMBO J.">
        <title>Complete nucleotide sequence of Saccharomyces cerevisiae chromosome X.</title>
        <authorList>
            <person name="Galibert F."/>
            <person name="Alexandraki D."/>
            <person name="Baur A."/>
            <person name="Boles E."/>
            <person name="Chalwatzis N."/>
            <person name="Chuat J.-C."/>
            <person name="Coster F."/>
            <person name="Cziepluch C."/>
            <person name="de Haan M."/>
            <person name="Domdey H."/>
            <person name="Durand P."/>
            <person name="Entian K.-D."/>
            <person name="Gatius M."/>
            <person name="Goffeau A."/>
            <person name="Grivell L.A."/>
            <person name="Hennemann A."/>
            <person name="Herbert C.J."/>
            <person name="Heumann K."/>
            <person name="Hilger F."/>
            <person name="Hollenberg C.P."/>
            <person name="Huang M.-E."/>
            <person name="Jacq C."/>
            <person name="Jauniaux J.-C."/>
            <person name="Katsoulou C."/>
            <person name="Kirchrath L."/>
            <person name="Kleine K."/>
            <person name="Kordes E."/>
            <person name="Koetter P."/>
            <person name="Liebl S."/>
            <person name="Louis E.J."/>
            <person name="Manus V."/>
            <person name="Mewes H.-W."/>
            <person name="Miosga T."/>
            <person name="Obermaier B."/>
            <person name="Perea J."/>
            <person name="Pohl T.M."/>
            <person name="Portetelle D."/>
            <person name="Pujol A."/>
            <person name="Purnelle B."/>
            <person name="Ramezani Rad M."/>
            <person name="Rasmussen S.W."/>
            <person name="Rose M."/>
            <person name="Rossau R."/>
            <person name="Schaaff-Gerstenschlaeger I."/>
            <person name="Smits P.H.M."/>
            <person name="Scarcez T."/>
            <person name="Soriano N."/>
            <person name="To Van D."/>
            <person name="Tzermia M."/>
            <person name="Van Broekhoven A."/>
            <person name="Vandenbol M."/>
            <person name="Wedler H."/>
            <person name="von Wettstein D."/>
            <person name="Wambutt R."/>
            <person name="Zagulski M."/>
            <person name="Zollner A."/>
            <person name="Karpfinger-Hartl L."/>
        </authorList>
    </citation>
    <scope>NUCLEOTIDE SEQUENCE [LARGE SCALE GENOMIC DNA]</scope>
    <source>
        <strain>ATCC 204508 / S288c</strain>
    </source>
</reference>
<reference key="3">
    <citation type="journal article" date="2014" name="G3 (Bethesda)">
        <title>The reference genome sequence of Saccharomyces cerevisiae: Then and now.</title>
        <authorList>
            <person name="Engel S.R."/>
            <person name="Dietrich F.S."/>
            <person name="Fisk D.G."/>
            <person name="Binkley G."/>
            <person name="Balakrishnan R."/>
            <person name="Costanzo M.C."/>
            <person name="Dwight S.S."/>
            <person name="Hitz B.C."/>
            <person name="Karra K."/>
            <person name="Nash R.S."/>
            <person name="Weng S."/>
            <person name="Wong E.D."/>
            <person name="Lloyd P."/>
            <person name="Skrzypek M.S."/>
            <person name="Miyasato S.R."/>
            <person name="Simison M."/>
            <person name="Cherry J.M."/>
        </authorList>
    </citation>
    <scope>GENOME REANNOTATION</scope>
    <scope>SEQUENCE REVISION TO 115</scope>
    <source>
        <strain>ATCC 204508 / S288c</strain>
    </source>
</reference>
<reference key="4">
    <citation type="journal article" date="1999" name="J. Bacteriol.">
        <title>Deletion of new covalently linked cell wall glycoproteins alters the electrophoretic mobility of phosphorylated wall components of Saccharomyces cerevisiae.</title>
        <authorList>
            <person name="Mrsa V."/>
            <person name="Ecker M."/>
            <person name="Strahl-Bolsinger S."/>
            <person name="Nimtz M."/>
            <person name="Lehle L."/>
            <person name="Tanner W."/>
        </authorList>
    </citation>
    <scope>PROTEIN SEQUENCE OF 20-27</scope>
    <scope>CHARACTERIZATION</scope>
    <scope>SUBCELLULAR LOCATION</scope>
</reference>
<reference key="5">
    <citation type="journal article" date="2001" name="J. Bacteriol.">
        <title>Reciprocal regulation of anaerobic and aerobic cell wall mannoprotein gene expression in Saccharomyces cerevisiae.</title>
        <authorList>
            <person name="Abramova N.E."/>
            <person name="Sertil O."/>
            <person name="Mehta S."/>
            <person name="Lowry C.V."/>
        </authorList>
    </citation>
    <scope>INDUCTION</scope>
</reference>
<evidence type="ECO:0000255" key="1"/>
<evidence type="ECO:0000256" key="2">
    <source>
        <dbReference type="SAM" id="MobiDB-lite"/>
    </source>
</evidence>
<evidence type="ECO:0000269" key="3">
    <source>
    </source>
</evidence>
<evidence type="ECO:0000269" key="4">
    <source>
    </source>
</evidence>
<evidence type="ECO:0000269" key="5">
    <source>
    </source>
</evidence>
<evidence type="ECO:0000305" key="6"/>
<organism>
    <name type="scientific">Saccharomyces cerevisiae (strain ATCC 204508 / S288c)</name>
    <name type="common">Baker's yeast</name>
    <dbReference type="NCBI Taxonomy" id="559292"/>
    <lineage>
        <taxon>Eukaryota</taxon>
        <taxon>Fungi</taxon>
        <taxon>Dikarya</taxon>
        <taxon>Ascomycota</taxon>
        <taxon>Saccharomycotina</taxon>
        <taxon>Saccharomycetes</taxon>
        <taxon>Saccharomycetales</taxon>
        <taxon>Saccharomycetaceae</taxon>
        <taxon>Saccharomyces</taxon>
    </lineage>
</organism>
<name>DAN1_YEAST</name>
<comment type="function">
    <text>Component of the cell wall.</text>
</comment>
<comment type="subcellular location">
    <subcellularLocation>
        <location evidence="3">Secreted</location>
        <location evidence="3">Cell wall</location>
    </subcellularLocation>
    <subcellularLocation>
        <location evidence="3">Membrane</location>
        <topology evidence="3">Lipid-anchor</topology>
        <topology evidence="3">GPI-anchor</topology>
    </subcellularLocation>
    <text>Covalently-linked GPI-modified cell wall protein (GPI-CWP).</text>
</comment>
<comment type="induction">
    <text evidence="4 5">Induced during anaerobic growth and completely repressed during aerobic growth.</text>
</comment>
<comment type="PTM">
    <text>Extensively O-glycosylated.</text>
</comment>
<comment type="PTM">
    <text>The GPI-anchor is attached to the protein in the endoplasmic reticulum and serves to target the protein to the cell surface. There, the glucosamine-inositol phospholipid moiety is cleaved off and the GPI-modified mannoprotein is covalently attached via its lipidless GPI glycan remnant to the 1,6-beta-glucan of the outer cell wall layer.</text>
</comment>
<comment type="similarity">
    <text evidence="6">Belongs to the SRP1/TIP1 family.</text>
</comment>
<dbReference type="EMBL" id="U69874">
    <property type="protein sequence ID" value="AAC49762.1"/>
    <property type="molecule type" value="Genomic_DNA"/>
</dbReference>
<dbReference type="EMBL" id="Z49650">
    <property type="protein sequence ID" value="CAA89683.1"/>
    <property type="molecule type" value="Genomic_DNA"/>
</dbReference>
<dbReference type="EMBL" id="BK006943">
    <property type="protein sequence ID" value="DAA08934.2"/>
    <property type="molecule type" value="Genomic_DNA"/>
</dbReference>
<dbReference type="PIR" id="S57179">
    <property type="entry name" value="S57179"/>
</dbReference>
<dbReference type="RefSeq" id="NP_012684.4">
    <property type="nucleotide sequence ID" value="NM_001181808.4"/>
</dbReference>
<dbReference type="BioGRID" id="33905">
    <property type="interactions" value="75"/>
</dbReference>
<dbReference type="FunCoup" id="P47178">
    <property type="interactions" value="62"/>
</dbReference>
<dbReference type="STRING" id="4932.YJR150C"/>
<dbReference type="PaxDb" id="4932-YJR150C"/>
<dbReference type="EnsemblFungi" id="YJR150C_mRNA">
    <property type="protein sequence ID" value="YJR150C"/>
    <property type="gene ID" value="YJR150C"/>
</dbReference>
<dbReference type="GeneID" id="853615"/>
<dbReference type="KEGG" id="sce:YJR150C"/>
<dbReference type="AGR" id="SGD:S000003911"/>
<dbReference type="SGD" id="S000003911">
    <property type="gene designation" value="DAN1"/>
</dbReference>
<dbReference type="VEuPathDB" id="FungiDB:YJR150C"/>
<dbReference type="eggNOG" id="ENOG502SR1B">
    <property type="taxonomic scope" value="Eukaryota"/>
</dbReference>
<dbReference type="GeneTree" id="ENSGT00940000176276"/>
<dbReference type="HOGENOM" id="CLU_071083_1_0_1"/>
<dbReference type="InParanoid" id="P47178"/>
<dbReference type="OMA" id="WYSSRIA"/>
<dbReference type="OrthoDB" id="4069594at2759"/>
<dbReference type="BioCyc" id="YEAST:G3O-31763-MONOMER"/>
<dbReference type="BioGRID-ORCS" id="853615">
    <property type="hits" value="6 hits in 10 CRISPR screens"/>
</dbReference>
<dbReference type="PRO" id="PR:P47178"/>
<dbReference type="Proteomes" id="UP000002311">
    <property type="component" value="Chromosome X"/>
</dbReference>
<dbReference type="RNAct" id="P47178">
    <property type="molecule type" value="protein"/>
</dbReference>
<dbReference type="GO" id="GO:0071944">
    <property type="term" value="C:cell periphery"/>
    <property type="evidence" value="ECO:0007005"/>
    <property type="project" value="SGD"/>
</dbReference>
<dbReference type="GO" id="GO:0005576">
    <property type="term" value="C:extracellular region"/>
    <property type="evidence" value="ECO:0007669"/>
    <property type="project" value="UniProtKB-KW"/>
</dbReference>
<dbReference type="GO" id="GO:0009277">
    <property type="term" value="C:fungal-type cell wall"/>
    <property type="evidence" value="ECO:0000314"/>
    <property type="project" value="SGD"/>
</dbReference>
<dbReference type="GO" id="GO:0098552">
    <property type="term" value="C:side of membrane"/>
    <property type="evidence" value="ECO:0007669"/>
    <property type="project" value="UniProtKB-KW"/>
</dbReference>
<dbReference type="GO" id="GO:0005199">
    <property type="term" value="F:structural constituent of cell wall"/>
    <property type="evidence" value="ECO:0000318"/>
    <property type="project" value="GO_Central"/>
</dbReference>
<dbReference type="GO" id="GO:0031505">
    <property type="term" value="P:fungal-type cell wall organization"/>
    <property type="evidence" value="ECO:0000318"/>
    <property type="project" value="GO_Central"/>
</dbReference>
<dbReference type="GO" id="GO:0015918">
    <property type="term" value="P:sterol transport"/>
    <property type="evidence" value="ECO:0000315"/>
    <property type="project" value="SGD"/>
</dbReference>
<dbReference type="InterPro" id="IPR000992">
    <property type="entry name" value="SRP1_TIP1"/>
</dbReference>
<dbReference type="InterPro" id="IPR050788">
    <property type="entry name" value="Yeast_SRP1/TIP1_CWP"/>
</dbReference>
<dbReference type="PANTHER" id="PTHR31002:SF34">
    <property type="entry name" value="CELL WALL PROTEIN CWP1-RELATED"/>
    <property type="match status" value="1"/>
</dbReference>
<dbReference type="PANTHER" id="PTHR31002">
    <property type="entry name" value="SERIPAUPERIN"/>
    <property type="match status" value="1"/>
</dbReference>
<dbReference type="Pfam" id="PF00660">
    <property type="entry name" value="SRP1_TIP1"/>
    <property type="match status" value="1"/>
</dbReference>
<dbReference type="PROSITE" id="PS00724">
    <property type="entry name" value="SRP1_TIP1"/>
    <property type="match status" value="1"/>
</dbReference>
<feature type="signal peptide" evidence="3">
    <location>
        <begin position="1"/>
        <end position="19"/>
    </location>
</feature>
<feature type="chain" id="PRO_0000033239" description="Cell wall protein DAN1">
    <location>
        <begin position="20"/>
        <end position="275"/>
    </location>
</feature>
<feature type="propeptide" id="PRO_0000033240" description="Removed in mature form" evidence="1">
    <location>
        <begin position="276"/>
        <end position="298"/>
    </location>
</feature>
<feature type="region of interest" description="Disordered" evidence="2">
    <location>
        <begin position="122"/>
        <end position="168"/>
    </location>
</feature>
<feature type="lipid moiety-binding region" description="GPI-anchor amidated asparagine" evidence="1">
    <location>
        <position position="275"/>
    </location>
</feature>
<feature type="sequence conflict" description="In Ref. 2; CAA89683." evidence="6" ref="2">
    <original>E</original>
    <variation>G</variation>
    <location>
        <position position="115"/>
    </location>
</feature>